<accession>Q9ZZ45</accession>
<evidence type="ECO:0000250" key="1"/>
<evidence type="ECO:0000255" key="2"/>
<evidence type="ECO:0000305" key="3"/>
<feature type="chain" id="PRO_0000117989" description="NADH-ubiquinone oxidoreductase chain 4">
    <location>
        <begin position="1"/>
        <end position="460"/>
    </location>
</feature>
<feature type="transmembrane region" description="Helical" evidence="2">
    <location>
        <begin position="22"/>
        <end position="42"/>
    </location>
</feature>
<feature type="transmembrane region" description="Helical" evidence="2">
    <location>
        <begin position="59"/>
        <end position="79"/>
    </location>
</feature>
<feature type="transmembrane region" description="Helical" evidence="2">
    <location>
        <begin position="93"/>
        <end position="113"/>
    </location>
</feature>
<feature type="transmembrane region" description="Helical" evidence="2">
    <location>
        <begin position="114"/>
        <end position="134"/>
    </location>
</feature>
<feature type="transmembrane region" description="Helical" evidence="2">
    <location>
        <begin position="148"/>
        <end position="168"/>
    </location>
</feature>
<feature type="transmembrane region" description="Helical" evidence="2">
    <location>
        <begin position="195"/>
        <end position="215"/>
    </location>
</feature>
<feature type="transmembrane region" description="Helical" evidence="2">
    <location>
        <begin position="225"/>
        <end position="245"/>
    </location>
</feature>
<feature type="transmembrane region" description="Helical" evidence="2">
    <location>
        <begin position="258"/>
        <end position="278"/>
    </location>
</feature>
<feature type="transmembrane region" description="Helical" evidence="2">
    <location>
        <begin position="286"/>
        <end position="306"/>
    </location>
</feature>
<feature type="transmembrane region" description="Helical" evidence="2">
    <location>
        <begin position="310"/>
        <end position="330"/>
    </location>
</feature>
<feature type="transmembrane region" description="Helical" evidence="2">
    <location>
        <begin position="351"/>
        <end position="371"/>
    </location>
</feature>
<feature type="transmembrane region" description="Helical" evidence="2">
    <location>
        <begin position="394"/>
        <end position="414"/>
    </location>
</feature>
<feature type="transmembrane region" description="Helical" evidence="2">
    <location>
        <begin position="440"/>
        <end position="460"/>
    </location>
</feature>
<gene>
    <name type="primary">MT-ND4</name>
    <name type="synonym">MTND4</name>
    <name type="synonym">NADH4</name>
    <name type="synonym">ND4</name>
</gene>
<geneLocation type="mitochondrion"/>
<organism>
    <name type="scientific">Squalus acanthias</name>
    <name type="common">Spiny dogfish</name>
    <dbReference type="NCBI Taxonomy" id="7797"/>
    <lineage>
        <taxon>Eukaryota</taxon>
        <taxon>Metazoa</taxon>
        <taxon>Chordata</taxon>
        <taxon>Craniata</taxon>
        <taxon>Vertebrata</taxon>
        <taxon>Chondrichthyes</taxon>
        <taxon>Elasmobranchii</taxon>
        <taxon>Squalomorphii</taxon>
        <taxon>Squaliformes</taxon>
        <taxon>Squalidae</taxon>
        <taxon>Squalus</taxon>
    </lineage>
</organism>
<reference key="1">
    <citation type="journal article" date="1999" name="J. Mol. Evol.">
        <title>Phylogenetic studies of complete mitochondrial DNA molecules place cartilaginous fishes within the tree of bony fishes.</title>
        <authorList>
            <person name="Rasmussen A.S."/>
            <person name="Arnason U."/>
        </authorList>
    </citation>
    <scope>NUCLEOTIDE SEQUENCE [GENOMIC DNA]</scope>
</reference>
<proteinExistence type="inferred from homology"/>
<keyword id="KW-0249">Electron transport</keyword>
<keyword id="KW-0472">Membrane</keyword>
<keyword id="KW-0496">Mitochondrion</keyword>
<keyword id="KW-0520">NAD</keyword>
<keyword id="KW-0679">Respiratory chain</keyword>
<keyword id="KW-1278">Translocase</keyword>
<keyword id="KW-0812">Transmembrane</keyword>
<keyword id="KW-1133">Transmembrane helix</keyword>
<keyword id="KW-0813">Transport</keyword>
<keyword id="KW-0830">Ubiquinone</keyword>
<protein>
    <recommendedName>
        <fullName>NADH-ubiquinone oxidoreductase chain 4</fullName>
        <ecNumber>7.1.1.2</ecNumber>
    </recommendedName>
    <alternativeName>
        <fullName>NADH dehydrogenase subunit 4</fullName>
    </alternativeName>
</protein>
<dbReference type="EC" id="7.1.1.2"/>
<dbReference type="EMBL" id="Y18134">
    <property type="protein sequence ID" value="CAA77058.1"/>
    <property type="molecule type" value="Genomic_DNA"/>
</dbReference>
<dbReference type="PIR" id="T11543">
    <property type="entry name" value="T11543"/>
</dbReference>
<dbReference type="RefSeq" id="NP_008532.1">
    <property type="nucleotide sequence ID" value="NC_002012.1"/>
</dbReference>
<dbReference type="SMR" id="Q9ZZ45"/>
<dbReference type="GeneID" id="808384"/>
<dbReference type="CTD" id="4538"/>
<dbReference type="GO" id="GO:0031966">
    <property type="term" value="C:mitochondrial membrane"/>
    <property type="evidence" value="ECO:0007669"/>
    <property type="project" value="UniProtKB-SubCell"/>
</dbReference>
<dbReference type="GO" id="GO:0008137">
    <property type="term" value="F:NADH dehydrogenase (ubiquinone) activity"/>
    <property type="evidence" value="ECO:0007669"/>
    <property type="project" value="UniProtKB-EC"/>
</dbReference>
<dbReference type="GO" id="GO:0048039">
    <property type="term" value="F:ubiquinone binding"/>
    <property type="evidence" value="ECO:0007669"/>
    <property type="project" value="TreeGrafter"/>
</dbReference>
<dbReference type="GO" id="GO:0042773">
    <property type="term" value="P:ATP synthesis coupled electron transport"/>
    <property type="evidence" value="ECO:0007669"/>
    <property type="project" value="InterPro"/>
</dbReference>
<dbReference type="GO" id="GO:0015990">
    <property type="term" value="P:electron transport coupled proton transport"/>
    <property type="evidence" value="ECO:0007669"/>
    <property type="project" value="TreeGrafter"/>
</dbReference>
<dbReference type="InterPro" id="IPR000260">
    <property type="entry name" value="NADH4_N"/>
</dbReference>
<dbReference type="InterPro" id="IPR010227">
    <property type="entry name" value="NADH_Q_OxRdtase_chainM/4"/>
</dbReference>
<dbReference type="InterPro" id="IPR003918">
    <property type="entry name" value="NADH_UbQ_OxRdtase"/>
</dbReference>
<dbReference type="InterPro" id="IPR001750">
    <property type="entry name" value="ND/Mrp_TM"/>
</dbReference>
<dbReference type="NCBIfam" id="TIGR01972">
    <property type="entry name" value="NDH_I_M"/>
    <property type="match status" value="1"/>
</dbReference>
<dbReference type="PANTHER" id="PTHR43507">
    <property type="entry name" value="NADH-UBIQUINONE OXIDOREDUCTASE CHAIN 4"/>
    <property type="match status" value="1"/>
</dbReference>
<dbReference type="PANTHER" id="PTHR43507:SF20">
    <property type="entry name" value="NADH-UBIQUINONE OXIDOREDUCTASE CHAIN 4"/>
    <property type="match status" value="1"/>
</dbReference>
<dbReference type="Pfam" id="PF01059">
    <property type="entry name" value="Oxidored_q5_N"/>
    <property type="match status" value="1"/>
</dbReference>
<dbReference type="Pfam" id="PF00361">
    <property type="entry name" value="Proton_antipo_M"/>
    <property type="match status" value="1"/>
</dbReference>
<dbReference type="PRINTS" id="PR01437">
    <property type="entry name" value="NUOXDRDTASE4"/>
</dbReference>
<sequence length="460" mass="52012">MLKILVPTIMLFLVTWSSPKKWLWPITTTHSLLIALLSLLWFKWNMDMGWDFSNHYLAIDPLSAPLLILTCWLLPLMILASQNHISTEPIIRQRIYITLLISLQTFLIMAFSATELIMFYIMFEATLIPTLIIITRWGNQTERLNAGTYFLFYTLIGSLPLLVALLLMQNDLGSLSMIIIQYPQPLSLSTWADKFWWTACLIAFLVKMPLYGVHLWLPKAHVEAPIAGSMILAAVLLKLGGYGMMRIIVMLNPLTKEMAYPFLILAIWGVIMTSSICLRQTDLKSLIAYSSVSHMGLVAGAIMIQTPWSFAGAITLMIAHGLVSSALFCLANTNYERTHSRTLLLARGIQVMLPLMATWWFIANLANLALPPTPNLMGELLIISSLFNWSSWTILLTGLGVLITASYSLYMFLMTQRGPASQHLLSLNPSYTREHLLLNLHLIPMLLLILKPELIWGWTF</sequence>
<name>NU4M_SQUAC</name>
<comment type="function">
    <text evidence="1">Core subunit of the mitochondrial membrane respiratory chain NADH dehydrogenase (Complex I) that is believed to belong to the minimal assembly required for catalysis. Complex I functions in the transfer of electrons from NADH to the respiratory chain. The immediate electron acceptor for the enzyme is believed to be ubiquinone (By similarity).</text>
</comment>
<comment type="catalytic activity">
    <reaction>
        <text>a ubiquinone + NADH + 5 H(+)(in) = a ubiquinol + NAD(+) + 4 H(+)(out)</text>
        <dbReference type="Rhea" id="RHEA:29091"/>
        <dbReference type="Rhea" id="RHEA-COMP:9565"/>
        <dbReference type="Rhea" id="RHEA-COMP:9566"/>
        <dbReference type="ChEBI" id="CHEBI:15378"/>
        <dbReference type="ChEBI" id="CHEBI:16389"/>
        <dbReference type="ChEBI" id="CHEBI:17976"/>
        <dbReference type="ChEBI" id="CHEBI:57540"/>
        <dbReference type="ChEBI" id="CHEBI:57945"/>
        <dbReference type="EC" id="7.1.1.2"/>
    </reaction>
</comment>
<comment type="subcellular location">
    <subcellularLocation>
        <location evidence="1">Mitochondrion membrane</location>
        <topology evidence="1">Multi-pass membrane protein</topology>
    </subcellularLocation>
</comment>
<comment type="similarity">
    <text evidence="3">Belongs to the complex I subunit 4 family.</text>
</comment>